<dbReference type="EC" id="1.6.5.2" evidence="1"/>
<dbReference type="EMBL" id="CP000653">
    <property type="protein sequence ID" value="ABP59282.1"/>
    <property type="molecule type" value="Genomic_DNA"/>
</dbReference>
<dbReference type="RefSeq" id="WP_012016004.1">
    <property type="nucleotide sequence ID" value="NC_009436.1"/>
</dbReference>
<dbReference type="SMR" id="A4W6F2"/>
<dbReference type="STRING" id="399742.Ent638_0595"/>
<dbReference type="KEGG" id="ent:Ent638_0595"/>
<dbReference type="eggNOG" id="COG2249">
    <property type="taxonomic scope" value="Bacteria"/>
</dbReference>
<dbReference type="HOGENOM" id="CLU_058643_0_2_6"/>
<dbReference type="OrthoDB" id="9798454at2"/>
<dbReference type="Proteomes" id="UP000000230">
    <property type="component" value="Chromosome"/>
</dbReference>
<dbReference type="GO" id="GO:0005886">
    <property type="term" value="C:plasma membrane"/>
    <property type="evidence" value="ECO:0007669"/>
    <property type="project" value="UniProtKB-SubCell"/>
</dbReference>
<dbReference type="GO" id="GO:0009055">
    <property type="term" value="F:electron transfer activity"/>
    <property type="evidence" value="ECO:0007669"/>
    <property type="project" value="TreeGrafter"/>
</dbReference>
<dbReference type="GO" id="GO:0010181">
    <property type="term" value="F:FMN binding"/>
    <property type="evidence" value="ECO:0007669"/>
    <property type="project" value="UniProtKB-UniRule"/>
</dbReference>
<dbReference type="GO" id="GO:0050136">
    <property type="term" value="F:NADH:ubiquinone reductase (non-electrogenic) activity"/>
    <property type="evidence" value="ECO:0007669"/>
    <property type="project" value="RHEA"/>
</dbReference>
<dbReference type="GO" id="GO:0008753">
    <property type="term" value="F:NADPH dehydrogenase (quinone) activity"/>
    <property type="evidence" value="ECO:0007669"/>
    <property type="project" value="RHEA"/>
</dbReference>
<dbReference type="GO" id="GO:1901381">
    <property type="term" value="P:positive regulation of potassium ion transmembrane transport"/>
    <property type="evidence" value="ECO:0007669"/>
    <property type="project" value="UniProtKB-UniRule"/>
</dbReference>
<dbReference type="GO" id="GO:0006813">
    <property type="term" value="P:potassium ion transport"/>
    <property type="evidence" value="ECO:0007669"/>
    <property type="project" value="InterPro"/>
</dbReference>
<dbReference type="Gene3D" id="3.40.50.360">
    <property type="match status" value="1"/>
</dbReference>
<dbReference type="HAMAP" id="MF_01414">
    <property type="entry name" value="K_H_efflux_KefF"/>
    <property type="match status" value="1"/>
</dbReference>
<dbReference type="InterPro" id="IPR003680">
    <property type="entry name" value="Flavodoxin_fold"/>
</dbReference>
<dbReference type="InterPro" id="IPR029039">
    <property type="entry name" value="Flavoprotein-like_sf"/>
</dbReference>
<dbReference type="InterPro" id="IPR023948">
    <property type="entry name" value="K_H_efflux_KefF"/>
</dbReference>
<dbReference type="InterPro" id="IPR046980">
    <property type="entry name" value="KefG/KefF"/>
</dbReference>
<dbReference type="NCBIfam" id="NF002044">
    <property type="entry name" value="PRK00871.1"/>
    <property type="match status" value="1"/>
</dbReference>
<dbReference type="PANTHER" id="PTHR47307:SF2">
    <property type="entry name" value="GLUTATHIONE-REGULATED POTASSIUM-EFFLUX SYSTEM ANCILLARY PROTEIN KEFF"/>
    <property type="match status" value="1"/>
</dbReference>
<dbReference type="PANTHER" id="PTHR47307">
    <property type="entry name" value="GLUTATHIONE-REGULATED POTASSIUM-EFFLUX SYSTEM ANCILLARY PROTEIN KEFG"/>
    <property type="match status" value="1"/>
</dbReference>
<dbReference type="Pfam" id="PF02525">
    <property type="entry name" value="Flavodoxin_2"/>
    <property type="match status" value="1"/>
</dbReference>
<dbReference type="SUPFAM" id="SSF52218">
    <property type="entry name" value="Flavoproteins"/>
    <property type="match status" value="1"/>
</dbReference>
<organism>
    <name type="scientific">Enterobacter sp. (strain 638)</name>
    <dbReference type="NCBI Taxonomy" id="399742"/>
    <lineage>
        <taxon>Bacteria</taxon>
        <taxon>Pseudomonadati</taxon>
        <taxon>Pseudomonadota</taxon>
        <taxon>Gammaproteobacteria</taxon>
        <taxon>Enterobacterales</taxon>
        <taxon>Enterobacteriaceae</taxon>
        <taxon>Enterobacter</taxon>
    </lineage>
</organism>
<feature type="chain" id="PRO_1000068468" description="Glutathione-regulated potassium-efflux system ancillary protein KefF">
    <location>
        <begin position="1"/>
        <end position="176"/>
    </location>
</feature>
<feature type="binding site" evidence="1">
    <location>
        <position position="8"/>
    </location>
    <ligand>
        <name>FMN</name>
        <dbReference type="ChEBI" id="CHEBI:58210"/>
    </ligand>
</feature>
<feature type="binding site" evidence="1">
    <location>
        <begin position="14"/>
        <end position="17"/>
    </location>
    <ligand>
        <name>FMN</name>
        <dbReference type="ChEBI" id="CHEBI:58210"/>
    </ligand>
</feature>
<feature type="binding site" evidence="1">
    <location>
        <begin position="65"/>
        <end position="68"/>
    </location>
    <ligand>
        <name>FMN</name>
        <dbReference type="ChEBI" id="CHEBI:58210"/>
    </ligand>
</feature>
<feature type="binding site" evidence="1">
    <location>
        <begin position="105"/>
        <end position="108"/>
    </location>
    <ligand>
        <name>FMN</name>
        <dbReference type="ChEBI" id="CHEBI:58210"/>
    </ligand>
</feature>
<comment type="function">
    <text evidence="1">Regulatory subunit of a potassium efflux system that confers protection against electrophiles. Required for full activity of KefC. Shows redox enzymatic activity, but this enzymatic activity is not required for activation of KefC.</text>
</comment>
<comment type="catalytic activity">
    <reaction evidence="1">
        <text>a quinone + NADH + H(+) = a quinol + NAD(+)</text>
        <dbReference type="Rhea" id="RHEA:46160"/>
        <dbReference type="ChEBI" id="CHEBI:15378"/>
        <dbReference type="ChEBI" id="CHEBI:24646"/>
        <dbReference type="ChEBI" id="CHEBI:57540"/>
        <dbReference type="ChEBI" id="CHEBI:57945"/>
        <dbReference type="ChEBI" id="CHEBI:132124"/>
        <dbReference type="EC" id="1.6.5.2"/>
    </reaction>
</comment>
<comment type="catalytic activity">
    <reaction evidence="1">
        <text>a quinone + NADPH + H(+) = a quinol + NADP(+)</text>
        <dbReference type="Rhea" id="RHEA:46164"/>
        <dbReference type="ChEBI" id="CHEBI:15378"/>
        <dbReference type="ChEBI" id="CHEBI:24646"/>
        <dbReference type="ChEBI" id="CHEBI:57783"/>
        <dbReference type="ChEBI" id="CHEBI:58349"/>
        <dbReference type="ChEBI" id="CHEBI:132124"/>
        <dbReference type="EC" id="1.6.5.2"/>
    </reaction>
</comment>
<comment type="cofactor">
    <cofactor evidence="1">
        <name>FMN</name>
        <dbReference type="ChEBI" id="CHEBI:58210"/>
    </cofactor>
</comment>
<comment type="subunit">
    <text evidence="1">Homodimer. Interacts with KefC.</text>
</comment>
<comment type="subcellular location">
    <subcellularLocation>
        <location evidence="1">Cell inner membrane</location>
        <topology evidence="1">Peripheral membrane protein</topology>
        <orientation evidence="1">Cytoplasmic side</orientation>
    </subcellularLocation>
</comment>
<comment type="similarity">
    <text evidence="1">Belongs to the NAD(P)H dehydrogenase (quinone) family. KefF subfamily.</text>
</comment>
<proteinExistence type="inferred from homology"/>
<keyword id="KW-0997">Cell inner membrane</keyword>
<keyword id="KW-1003">Cell membrane</keyword>
<keyword id="KW-0285">Flavoprotein</keyword>
<keyword id="KW-0288">FMN</keyword>
<keyword id="KW-0472">Membrane</keyword>
<keyword id="KW-0520">NAD</keyword>
<keyword id="KW-0560">Oxidoreductase</keyword>
<accession>A4W6F2</accession>
<reference key="1">
    <citation type="journal article" date="2010" name="PLoS Genet.">
        <title>Genome sequence of the plant growth promoting endophytic bacterium Enterobacter sp. 638.</title>
        <authorList>
            <person name="Taghavi S."/>
            <person name="van der Lelie D."/>
            <person name="Hoffman A."/>
            <person name="Zhang Y.B."/>
            <person name="Walla M.D."/>
            <person name="Vangronsveld J."/>
            <person name="Newman L."/>
            <person name="Monchy S."/>
        </authorList>
    </citation>
    <scope>NUCLEOTIDE SEQUENCE [LARGE SCALE GENOMIC DNA]</scope>
    <source>
        <strain>638</strain>
    </source>
</reference>
<evidence type="ECO:0000255" key="1">
    <source>
        <dbReference type="HAMAP-Rule" id="MF_01414"/>
    </source>
</evidence>
<sequence length="176" mass="20132">MILIIYAHPYPRHSHANKRMLDQVKVLDGVEIRSLYELYPDFNIDIAAEQEAISRADLIVWQHPMQWYSTPALLKLWIDKVFSHGWAYGHNGHALKGKSVLWAVTTGGGEAHFDIGSHPGFEVLAQPLQATALYCGLQWLPPFAMHCTFVCDDETLQAQARHYKQRLLDWQETHNG</sequence>
<gene>
    <name evidence="1" type="primary">kefF</name>
    <name type="ordered locus">Ent638_0595</name>
</gene>
<name>KEFF_ENT38</name>
<protein>
    <recommendedName>
        <fullName evidence="1">Glutathione-regulated potassium-efflux system ancillary protein KefF</fullName>
    </recommendedName>
    <alternativeName>
        <fullName evidence="1">Quinone oxidoreductase KefF</fullName>
        <ecNumber evidence="1">1.6.5.2</ecNumber>
    </alternativeName>
</protein>